<feature type="signal peptide" evidence="2">
    <location>
        <begin position="1"/>
        <end position="23"/>
    </location>
</feature>
<feature type="chain" id="PRO_0000064890" description="Anther-specific protein BCP1">
    <location>
        <begin position="24"/>
        <end position="119"/>
    </location>
</feature>
<feature type="topological domain" description="Extracellular" evidence="2">
    <location>
        <begin position="24"/>
        <end position="98"/>
    </location>
</feature>
<feature type="transmembrane region" description="Helical" evidence="2">
    <location>
        <begin position="99"/>
        <end position="118"/>
    </location>
</feature>
<feature type="topological domain" description="Cytoplasmic" evidence="2">
    <location>
        <position position="119"/>
    </location>
</feature>
<feature type="region of interest" description="Disordered" evidence="3">
    <location>
        <begin position="24"/>
        <end position="95"/>
    </location>
</feature>
<feature type="compositionally biased region" description="Low complexity" evidence="3">
    <location>
        <begin position="24"/>
        <end position="42"/>
    </location>
</feature>
<feature type="compositionally biased region" description="Acidic residues" evidence="3">
    <location>
        <begin position="56"/>
        <end position="69"/>
    </location>
</feature>
<feature type="compositionally biased region" description="Low complexity" evidence="3">
    <location>
        <begin position="82"/>
        <end position="95"/>
    </location>
</feature>
<protein>
    <recommendedName>
        <fullName>Anther-specific protein BCP1</fullName>
    </recommendedName>
</protein>
<proteinExistence type="evidence at transcript level"/>
<accession>P41507</accession>
<keyword id="KW-0217">Developmental protein</keyword>
<keyword id="KW-0472">Membrane</keyword>
<keyword id="KW-1185">Reference proteome</keyword>
<keyword id="KW-0732">Signal</keyword>
<keyword id="KW-0812">Transmembrane</keyword>
<keyword id="KW-1133">Transmembrane helix</keyword>
<reference key="1">
    <citation type="journal article" date="1991" name="Plant Cell">
        <title>Isolation and developmental expression of Bcp1, an anther-specific cDNA clone in Brassica campestris.</title>
        <authorList>
            <person name="Theerakulpisut P."/>
            <person name="Xu H."/>
            <person name="Singh M.B."/>
            <person name="Pettitt J.M."/>
            <person name="Knox R.B."/>
        </authorList>
    </citation>
    <scope>NUCLEOTIDE SEQUENCE [MRNA]</scope>
    <source>
        <tissue>Pollen</tissue>
    </source>
</reference>
<dbReference type="EMBL" id="X68209">
    <property type="protein sequence ID" value="CAA48291.1"/>
    <property type="molecule type" value="mRNA"/>
</dbReference>
<dbReference type="PIR" id="JQ1327">
    <property type="entry name" value="JQ1327"/>
</dbReference>
<dbReference type="RefSeq" id="XP_009113806.1">
    <property type="nucleotide sequence ID" value="XM_009115558.2"/>
</dbReference>
<dbReference type="SMR" id="P41507"/>
<dbReference type="GeneID" id="103839070"/>
<dbReference type="KEGG" id="brp:103839070"/>
<dbReference type="Proteomes" id="UP000011750">
    <property type="component" value="Unplaced"/>
</dbReference>
<dbReference type="GO" id="GO:0016020">
    <property type="term" value="C:membrane"/>
    <property type="evidence" value="ECO:0007669"/>
    <property type="project" value="UniProtKB-SubCell"/>
</dbReference>
<gene>
    <name type="primary">BCP1</name>
</gene>
<name>BCP1_BRACM</name>
<comment type="function">
    <text evidence="1">Required for pollen fertility and development. Active in both diploid tapetum and haploid microspores (By similarity). Major pollen protein.</text>
</comment>
<comment type="subcellular location">
    <subcellularLocation>
        <location evidence="4">Membrane</location>
        <topology evidence="4">Single-pass type I membrane protein</topology>
    </subcellularLocation>
</comment>
<comment type="tissue specificity">
    <text>Expressed in mature pollen grains, developing microspores and tapetal cells.</text>
</comment>
<comment type="developmental stage">
    <text>Activated in the tapetal cells in early anther development and continues to be expressed until tapetal dissolution.</text>
</comment>
<evidence type="ECO:0000250" key="1"/>
<evidence type="ECO:0000255" key="2"/>
<evidence type="ECO:0000256" key="3">
    <source>
        <dbReference type="SAM" id="MobiDB-lite"/>
    </source>
</evidence>
<evidence type="ECO:0000305" key="4"/>
<sequence length="119" mass="11290">MGRQNVVVVFGLVFLAVLGLAAAASSPSPSASPSKAPSTSTPEVEAPVSEDTIGTTDDDAAASPGDDDVAVAGPLGSDSSYGSNGPSGSADSADSGAAALGVSAVVVGVTSIVGSFLFF</sequence>
<organism>
    <name type="scientific">Brassica campestris</name>
    <name type="common">Field mustard</name>
    <dbReference type="NCBI Taxonomy" id="3711"/>
    <lineage>
        <taxon>Eukaryota</taxon>
        <taxon>Viridiplantae</taxon>
        <taxon>Streptophyta</taxon>
        <taxon>Embryophyta</taxon>
        <taxon>Tracheophyta</taxon>
        <taxon>Spermatophyta</taxon>
        <taxon>Magnoliopsida</taxon>
        <taxon>eudicotyledons</taxon>
        <taxon>Gunneridae</taxon>
        <taxon>Pentapetalae</taxon>
        <taxon>rosids</taxon>
        <taxon>malvids</taxon>
        <taxon>Brassicales</taxon>
        <taxon>Brassicaceae</taxon>
        <taxon>Brassiceae</taxon>
        <taxon>Brassica</taxon>
    </lineage>
</organism>